<name>MDHP1_SORBI</name>
<organism>
    <name type="scientific">Sorghum bicolor</name>
    <name type="common">Sorghum</name>
    <name type="synonym">Sorghum vulgare</name>
    <dbReference type="NCBI Taxonomy" id="4558"/>
    <lineage>
        <taxon>Eukaryota</taxon>
        <taxon>Viridiplantae</taxon>
        <taxon>Streptophyta</taxon>
        <taxon>Embryophyta</taxon>
        <taxon>Tracheophyta</taxon>
        <taxon>Spermatophyta</taxon>
        <taxon>Magnoliopsida</taxon>
        <taxon>Liliopsida</taxon>
        <taxon>Poales</taxon>
        <taxon>Poaceae</taxon>
        <taxon>PACMAD clade</taxon>
        <taxon>Panicoideae</taxon>
        <taxon>Andropogonodae</taxon>
        <taxon>Andropogoneae</taxon>
        <taxon>Sorghinae</taxon>
        <taxon>Sorghum</taxon>
    </lineage>
</organism>
<protein>
    <recommendedName>
        <fullName>Malate dehydrogenase [NADP] 1, chloroplastic</fullName>
        <ecNumber>1.1.1.82</ecNumber>
    </recommendedName>
    <alternativeName>
        <fullName>NADP-MDH-1</fullName>
    </alternativeName>
</protein>
<accession>P17606</accession>
<accession>P19796</accession>
<evidence type="ECO:0000250" key="1"/>
<evidence type="ECO:0000255" key="2">
    <source>
        <dbReference type="PROSITE-ProRule" id="PRU10004"/>
    </source>
</evidence>
<evidence type="ECO:0000269" key="3">
    <source>
    </source>
</evidence>
<evidence type="ECO:0000305" key="4"/>
<evidence type="ECO:0007829" key="5">
    <source>
        <dbReference type="PDB" id="7MDH"/>
    </source>
</evidence>
<comment type="function">
    <text>The chloroplastic, NADP-dependent form is essential for the photosynthesis C4 cycle, which allows plants to circumvent the problem of photorespiration. In C4 plants, NADP-MDH activity acts to convert oxaloacetate to malate in chloroplasts of mesophyll cells for transport to the bundle sheath cells.</text>
</comment>
<comment type="catalytic activity">
    <reaction>
        <text>(S)-malate + NADP(+) = oxaloacetate + NADPH + H(+)</text>
        <dbReference type="Rhea" id="RHEA:10824"/>
        <dbReference type="ChEBI" id="CHEBI:15378"/>
        <dbReference type="ChEBI" id="CHEBI:15589"/>
        <dbReference type="ChEBI" id="CHEBI:16452"/>
        <dbReference type="ChEBI" id="CHEBI:57783"/>
        <dbReference type="ChEBI" id="CHEBI:58349"/>
        <dbReference type="EC" id="1.1.1.82"/>
    </reaction>
</comment>
<comment type="activity regulation">
    <text>Chloroplast NADP-MDH is activated upon illumination. In order to be enzymatically active, disulfide bridges on the protein must be reduced by thioredoxin which receives electrons from ferredoxin and the electron transport system of photosynthesis.</text>
</comment>
<comment type="subunit">
    <text evidence="3">Homodimer.</text>
</comment>
<comment type="subcellular location">
    <subcellularLocation>
        <location>Plastid</location>
        <location>Chloroplast</location>
    </subcellularLocation>
</comment>
<comment type="similarity">
    <text evidence="4">Belongs to the LDH/MDH superfamily. MDH type 2 family.</text>
</comment>
<sequence>MGLSTAYSPVGSHLAPAPLGHRRSAQLHRPRRALLATVRCSVDAAKQVQDGVATAEAPATRKDCFGVFCTTYDLKAEDKTKSWKKLVNIAVSGAAGMISNHLLFKLASGEVFGQDQPIALKLLGSERSFQALEGVAMELEDSLYPLLREVSIGIDPYEVFEDVDWALLIGAKPRGPGMERAALLDINGQIFADQGKALNAVASKNVKVLVVGNPCNTNALICLKNAPDIPAKNFHALTRLDENRAKCQLALKAGVFYDKVSNVTIWGNHSTTQVPDFLNAKIDGRPVKEVIKDTKWLEEEFTITVQKRGGALIQKWGRSSAASTAVSIADAIKSLVTPTPEGDWFSTGVYTTGNPYGIAEDIVFSMPCRSKGDGDYELATDVSMDDFLWERIKKSEAELLAEKKCVAHLTGEGNAYCDVPEDTMLPGEV</sequence>
<dbReference type="EC" id="1.1.1.82"/>
<dbReference type="EMBL" id="M31965">
    <property type="protein sequence ID" value="AAA34047.1"/>
    <property type="molecule type" value="Genomic_DNA"/>
</dbReference>
<dbReference type="EMBL" id="X53453">
    <property type="protein sequence ID" value="CAA37531.1"/>
    <property type="molecule type" value="mRNA"/>
</dbReference>
<dbReference type="PIR" id="JH0151">
    <property type="entry name" value="JH0151"/>
</dbReference>
<dbReference type="PIR" id="S13588">
    <property type="entry name" value="S13588"/>
</dbReference>
<dbReference type="RefSeq" id="NP_001410886.1">
    <property type="nucleotide sequence ID" value="NM_001423957.1"/>
</dbReference>
<dbReference type="RefSeq" id="XP_002445670.1">
    <property type="nucleotide sequence ID" value="XM_002445625.1"/>
</dbReference>
<dbReference type="PDB" id="7MDH">
    <property type="method" value="X-ray"/>
    <property type="resolution" value="2.40 A"/>
    <property type="chains" value="A/B/C/D=55-429"/>
</dbReference>
<dbReference type="PDBsum" id="7MDH"/>
<dbReference type="SMR" id="P17606"/>
<dbReference type="EnsemblPlants" id="EES15165">
    <property type="protein sequence ID" value="EES15165"/>
    <property type="gene ID" value="SORBI_3007G166300"/>
</dbReference>
<dbReference type="GeneID" id="8057802"/>
<dbReference type="Gramene" id="EES15165">
    <property type="protein sequence ID" value="EES15165"/>
    <property type="gene ID" value="SORBI_3007G166300"/>
</dbReference>
<dbReference type="KEGG" id="sbi:8057802"/>
<dbReference type="eggNOG" id="KOG1496">
    <property type="taxonomic scope" value="Eukaryota"/>
</dbReference>
<dbReference type="HOGENOM" id="CLU_040727_3_0_1"/>
<dbReference type="OMA" id="GLEINDW"/>
<dbReference type="OrthoDB" id="4069699at2759"/>
<dbReference type="BRENDA" id="1.1.1.82">
    <property type="organism ID" value="5768"/>
</dbReference>
<dbReference type="SABIO-RK" id="P17606"/>
<dbReference type="EvolutionaryTrace" id="P17606"/>
<dbReference type="ExpressionAtlas" id="P17606">
    <property type="expression patterns" value="baseline and differential"/>
</dbReference>
<dbReference type="GO" id="GO:0009507">
    <property type="term" value="C:chloroplast"/>
    <property type="evidence" value="ECO:0007669"/>
    <property type="project" value="UniProtKB-SubCell"/>
</dbReference>
<dbReference type="GO" id="GO:0046554">
    <property type="term" value="F:L-malate dehydrogenase (NADP+) activity"/>
    <property type="evidence" value="ECO:0007669"/>
    <property type="project" value="UniProtKB-EC"/>
</dbReference>
<dbReference type="GO" id="GO:0006108">
    <property type="term" value="P:malate metabolic process"/>
    <property type="evidence" value="ECO:0007669"/>
    <property type="project" value="InterPro"/>
</dbReference>
<dbReference type="CDD" id="cd01338">
    <property type="entry name" value="MDH_chloroplast-like"/>
    <property type="match status" value="1"/>
</dbReference>
<dbReference type="FunFam" id="3.90.110.10:FF:000002">
    <property type="entry name" value="Malate dehydrogenase"/>
    <property type="match status" value="1"/>
</dbReference>
<dbReference type="FunFam" id="3.40.50.720:FF:000144">
    <property type="entry name" value="Malate dehydrogenase [NADP]"/>
    <property type="match status" value="1"/>
</dbReference>
<dbReference type="Gene3D" id="3.90.110.10">
    <property type="entry name" value="Lactate dehydrogenase/glycoside hydrolase, family 4, C-terminal"/>
    <property type="match status" value="1"/>
</dbReference>
<dbReference type="Gene3D" id="3.40.50.720">
    <property type="entry name" value="NAD(P)-binding Rossmann-like Domain"/>
    <property type="match status" value="1"/>
</dbReference>
<dbReference type="InterPro" id="IPR022383">
    <property type="entry name" value="Lactate/malate_DH_C"/>
</dbReference>
<dbReference type="InterPro" id="IPR001236">
    <property type="entry name" value="Lactate/malate_DH_N"/>
</dbReference>
<dbReference type="InterPro" id="IPR015955">
    <property type="entry name" value="Lactate_DH/Glyco_Ohase_4_C"/>
</dbReference>
<dbReference type="InterPro" id="IPR001252">
    <property type="entry name" value="Malate_DH_AS"/>
</dbReference>
<dbReference type="InterPro" id="IPR011273">
    <property type="entry name" value="Malate_DH_NADP-dep_pln"/>
</dbReference>
<dbReference type="InterPro" id="IPR010945">
    <property type="entry name" value="Malate_DH_type2"/>
</dbReference>
<dbReference type="InterPro" id="IPR036291">
    <property type="entry name" value="NAD(P)-bd_dom_sf"/>
</dbReference>
<dbReference type="NCBIfam" id="TIGR01757">
    <property type="entry name" value="Malate-DH_plant"/>
    <property type="match status" value="1"/>
</dbReference>
<dbReference type="NCBIfam" id="TIGR01759">
    <property type="entry name" value="MalateDH-SF1"/>
    <property type="match status" value="1"/>
</dbReference>
<dbReference type="NCBIfam" id="NF003916">
    <property type="entry name" value="PRK05442.1"/>
    <property type="match status" value="1"/>
</dbReference>
<dbReference type="PANTHER" id="PTHR23382">
    <property type="entry name" value="MALATE DEHYDROGENASE"/>
    <property type="match status" value="1"/>
</dbReference>
<dbReference type="Pfam" id="PF02866">
    <property type="entry name" value="Ldh_1_C"/>
    <property type="match status" value="1"/>
</dbReference>
<dbReference type="Pfam" id="PF00056">
    <property type="entry name" value="Ldh_1_N"/>
    <property type="match status" value="1"/>
</dbReference>
<dbReference type="SUPFAM" id="SSF56327">
    <property type="entry name" value="LDH C-terminal domain-like"/>
    <property type="match status" value="1"/>
</dbReference>
<dbReference type="SUPFAM" id="SSF51735">
    <property type="entry name" value="NAD(P)-binding Rossmann-fold domains"/>
    <property type="match status" value="1"/>
</dbReference>
<dbReference type="PROSITE" id="PS00068">
    <property type="entry name" value="MDH"/>
    <property type="match status" value="1"/>
</dbReference>
<reference key="1">
    <citation type="journal article" date="1990" name="Gene">
        <title>Structure and characterization of the Sorghum vulgare gene encoding NADP-malate dehydrogenase.</title>
        <authorList>
            <person name="Luchetta P."/>
            <person name="Cretin C."/>
            <person name="Gadal P."/>
        </authorList>
    </citation>
    <scope>NUCLEOTIDE SEQUENCE [GENOMIC DNA]</scope>
    <source>
        <strain>cv. INRA 450</strain>
        <tissue>Leaf</tissue>
    </source>
</reference>
<reference key="2">
    <citation type="journal article" date="1990" name="Eur. J. Biochem.">
        <title>Primary structure of sorghum malate dehydrogenase (NADP) deduced from cDNA sequence. Homology with malate dehydrogenase (NAD).</title>
        <authorList>
            <person name="Cretin C."/>
            <person name="Luchetta P."/>
            <person name="Joly C."/>
            <person name="Decottignies P."/>
            <person name="Lepiniec L."/>
            <person name="Gadal P."/>
            <person name="Sallantin M."/>
            <person name="Huet J.-C."/>
            <person name="Pernollet J.-C."/>
        </authorList>
    </citation>
    <scope>NUCLEOTIDE SEQUENCE [MRNA]</scope>
    <source>
        <strain>cv. Tamaran FNK 140</strain>
        <tissue>Leaf</tissue>
    </source>
</reference>
<reference key="3">
    <citation type="journal article" date="1999" name="Biochemistry">
        <title>Structural basis for light activation of a chloroplast enzyme: the structure of sorghum NADP-malate dehydrogenase in its oxidized form.</title>
        <authorList>
            <person name="Johansson K."/>
            <person name="Ramaswamy S."/>
            <person name="Saarinen M."/>
            <person name="Lemaire-Chamley M."/>
            <person name="Issakidis-Bourguet E."/>
            <person name="Miginiac-Maslow M."/>
            <person name="Eklund H."/>
        </authorList>
    </citation>
    <scope>X-RAY CRYSTALLOGRAPHY (2.4 ANGSTROMS)</scope>
    <scope>SUBUNIT</scope>
</reference>
<keyword id="KW-0002">3D-structure</keyword>
<keyword id="KW-0150">Chloroplast</keyword>
<keyword id="KW-1015">Disulfide bond</keyword>
<keyword id="KW-0521">NADP</keyword>
<keyword id="KW-0560">Oxidoreductase</keyword>
<keyword id="KW-0934">Plastid</keyword>
<keyword id="KW-0809">Transit peptide</keyword>
<proteinExistence type="evidence at protein level"/>
<feature type="transit peptide" description="Chloroplast" evidence="1">
    <location>
        <begin position="1"/>
        <end position="40"/>
    </location>
</feature>
<feature type="chain" id="PRO_0000018647" description="Malate dehydrogenase [NADP] 1, chloroplastic">
    <location>
        <begin position="41"/>
        <end position="429"/>
    </location>
</feature>
<feature type="active site" description="Proton acceptor" evidence="1">
    <location>
        <position position="269"/>
    </location>
</feature>
<feature type="binding site" evidence="1">
    <location>
        <begin position="93"/>
        <end position="99"/>
    </location>
    <ligand>
        <name>NADP(+)</name>
        <dbReference type="ChEBI" id="CHEBI:58349"/>
    </ligand>
</feature>
<feature type="binding site" evidence="2">
    <location>
        <position position="174"/>
    </location>
    <ligand>
        <name>substrate</name>
    </ligand>
</feature>
<feature type="binding site" evidence="2">
    <location>
        <position position="180"/>
    </location>
    <ligand>
        <name>substrate</name>
    </ligand>
</feature>
<feature type="binding site" evidence="1">
    <location>
        <position position="187"/>
    </location>
    <ligand>
        <name>NADP(+)</name>
        <dbReference type="ChEBI" id="CHEBI:58349"/>
    </ligand>
</feature>
<feature type="binding site" evidence="1">
    <location>
        <position position="194"/>
    </location>
    <ligand>
        <name>NADP(+)</name>
        <dbReference type="ChEBI" id="CHEBI:58349"/>
    </ligand>
</feature>
<feature type="binding site" evidence="1">
    <location>
        <begin position="211"/>
        <end position="213"/>
    </location>
    <ligand>
        <name>NADP(+)</name>
        <dbReference type="ChEBI" id="CHEBI:58349"/>
    </ligand>
</feature>
<feature type="binding site" evidence="2">
    <location>
        <position position="213"/>
    </location>
    <ligand>
        <name>substrate</name>
    </ligand>
</feature>
<feature type="binding site" evidence="2">
    <location>
        <position position="244"/>
    </location>
    <ligand>
        <name>substrate</name>
    </ligand>
</feature>
<feature type="site" description="Activation of NADP-MDH">
    <location>
        <position position="64"/>
    </location>
</feature>
<feature type="site" description="Activation of NADP-MDH">
    <location>
        <position position="69"/>
    </location>
</feature>
<feature type="disulfide bond" description="In oxidized inactive NAD-MDH">
    <location>
        <begin position="64"/>
        <end position="69"/>
    </location>
</feature>
<feature type="disulfide bond" description="In oxidized inactive NAD-MDH">
    <location>
        <begin position="405"/>
        <end position="417"/>
    </location>
</feature>
<feature type="sequence conflict" description="In Ref. 2; CAA37531." evidence="4" ref="2">
    <original>APD</original>
    <variation>PPH</variation>
    <location>
        <begin position="226"/>
        <end position="228"/>
    </location>
</feature>
<feature type="helix" evidence="5">
    <location>
        <begin position="66"/>
        <end position="68"/>
    </location>
</feature>
<feature type="strand" evidence="5">
    <location>
        <begin position="87"/>
        <end position="92"/>
    </location>
</feature>
<feature type="turn" evidence="5">
    <location>
        <begin position="93"/>
        <end position="95"/>
    </location>
</feature>
<feature type="helix" evidence="5">
    <location>
        <begin position="97"/>
        <end position="107"/>
    </location>
</feature>
<feature type="turn" evidence="5">
    <location>
        <begin position="108"/>
        <end position="112"/>
    </location>
</feature>
<feature type="strand" evidence="5">
    <location>
        <begin position="118"/>
        <end position="123"/>
    </location>
</feature>
<feature type="helix" evidence="5">
    <location>
        <begin position="126"/>
        <end position="128"/>
    </location>
</feature>
<feature type="helix" evidence="5">
    <location>
        <begin position="129"/>
        <end position="140"/>
    </location>
</feature>
<feature type="strand" evidence="5">
    <location>
        <begin position="147"/>
        <end position="154"/>
    </location>
</feature>
<feature type="helix" evidence="5">
    <location>
        <begin position="156"/>
        <end position="159"/>
    </location>
</feature>
<feature type="turn" evidence="5">
    <location>
        <begin position="160"/>
        <end position="162"/>
    </location>
</feature>
<feature type="strand" evidence="5">
    <location>
        <begin position="164"/>
        <end position="168"/>
    </location>
</feature>
<feature type="helix" evidence="5">
    <location>
        <begin position="180"/>
        <end position="201"/>
    </location>
</feature>
<feature type="strand" evidence="5">
    <location>
        <begin position="207"/>
        <end position="210"/>
    </location>
</feature>
<feature type="strand" evidence="5">
    <location>
        <begin position="212"/>
        <end position="214"/>
    </location>
</feature>
<feature type="helix" evidence="5">
    <location>
        <begin position="215"/>
        <end position="224"/>
    </location>
</feature>
<feature type="helix" evidence="5">
    <location>
        <begin position="231"/>
        <end position="233"/>
    </location>
</feature>
<feature type="strand" evidence="5">
    <location>
        <begin position="234"/>
        <end position="236"/>
    </location>
</feature>
<feature type="helix" evidence="5">
    <location>
        <begin position="239"/>
        <end position="252"/>
    </location>
</feature>
<feature type="helix" evidence="5">
    <location>
        <begin position="257"/>
        <end position="259"/>
    </location>
</feature>
<feature type="strand" evidence="5">
    <location>
        <begin position="264"/>
        <end position="267"/>
    </location>
</feature>
<feature type="strand" evidence="5">
    <location>
        <begin position="274"/>
        <end position="276"/>
    </location>
</feature>
<feature type="helix" evidence="5">
    <location>
        <begin position="287"/>
        <end position="289"/>
    </location>
</feature>
<feature type="helix" evidence="5">
    <location>
        <begin position="294"/>
        <end position="306"/>
    </location>
</feature>
<feature type="helix" evidence="5">
    <location>
        <begin position="308"/>
        <end position="315"/>
    </location>
</feature>
<feature type="helix" evidence="5">
    <location>
        <begin position="321"/>
        <end position="336"/>
    </location>
</feature>
<feature type="strand" evidence="5">
    <location>
        <begin position="345"/>
        <end position="350"/>
    </location>
</feature>
<feature type="strand" evidence="5">
    <location>
        <begin position="360"/>
        <end position="369"/>
    </location>
</feature>
<feature type="strand" evidence="5">
    <location>
        <begin position="372"/>
        <end position="374"/>
    </location>
</feature>
<feature type="helix" evidence="5">
    <location>
        <begin position="386"/>
        <end position="405"/>
    </location>
</feature>
<feature type="helix" evidence="5">
    <location>
        <begin position="407"/>
        <end position="410"/>
    </location>
</feature>
<feature type="strand" evidence="5">
    <location>
        <begin position="412"/>
        <end position="414"/>
    </location>
</feature>